<comment type="function">
    <text>Glutamate-gated receptor that probably acts as a non-selective cation channel. May be involved in light-signal transduction and calcium homeostasis via the regulation of calcium influx into cells.</text>
</comment>
<comment type="subunit">
    <text evidence="1">May form heteromers.</text>
</comment>
<comment type="subcellular location">
    <subcellularLocation>
        <location>Membrane</location>
        <topology>Multi-pass membrane protein</topology>
    </subcellularLocation>
</comment>
<comment type="tissue specificity">
    <text evidence="4">Expressed predominantly in roots.</text>
</comment>
<comment type="similarity">
    <text evidence="5">Belongs to the glutamate-gated ion channel (TC 1.A.10.1) family.</text>
</comment>
<gene>
    <name type="primary">GLR2.9</name>
    <name type="ordered locus">At2g29100</name>
    <name type="ORF">T9I4.18</name>
</gene>
<keyword id="KW-0325">Glycoprotein</keyword>
<keyword id="KW-0407">Ion channel</keyword>
<keyword id="KW-0406">Ion transport</keyword>
<keyword id="KW-1071">Ligand-gated ion channel</keyword>
<keyword id="KW-0472">Membrane</keyword>
<keyword id="KW-0675">Receptor</keyword>
<keyword id="KW-1185">Reference proteome</keyword>
<keyword id="KW-0732">Signal</keyword>
<keyword id="KW-0812">Transmembrane</keyword>
<keyword id="KW-1133">Transmembrane helix</keyword>
<keyword id="KW-0813">Transport</keyword>
<reference key="1">
    <citation type="journal article" date="1999" name="Nature">
        <title>Sequence and analysis of chromosome 2 of the plant Arabidopsis thaliana.</title>
        <authorList>
            <person name="Lin X."/>
            <person name="Kaul S."/>
            <person name="Rounsley S.D."/>
            <person name="Shea T.P."/>
            <person name="Benito M.-I."/>
            <person name="Town C.D."/>
            <person name="Fujii C.Y."/>
            <person name="Mason T.M."/>
            <person name="Bowman C.L."/>
            <person name="Barnstead M.E."/>
            <person name="Feldblyum T.V."/>
            <person name="Buell C.R."/>
            <person name="Ketchum K.A."/>
            <person name="Lee J.J."/>
            <person name="Ronning C.M."/>
            <person name="Koo H.L."/>
            <person name="Moffat K.S."/>
            <person name="Cronin L.A."/>
            <person name="Shen M."/>
            <person name="Pai G."/>
            <person name="Van Aken S."/>
            <person name="Umayam L."/>
            <person name="Tallon L.J."/>
            <person name="Gill J.E."/>
            <person name="Adams M.D."/>
            <person name="Carrera A.J."/>
            <person name="Creasy T.H."/>
            <person name="Goodman H.M."/>
            <person name="Somerville C.R."/>
            <person name="Copenhaver G.P."/>
            <person name="Preuss D."/>
            <person name="Nierman W.C."/>
            <person name="White O."/>
            <person name="Eisen J.A."/>
            <person name="Salzberg S.L."/>
            <person name="Fraser C.M."/>
            <person name="Venter J.C."/>
        </authorList>
    </citation>
    <scope>NUCLEOTIDE SEQUENCE [LARGE SCALE GENOMIC DNA]</scope>
    <source>
        <strain>cv. Columbia</strain>
    </source>
</reference>
<reference key="2">
    <citation type="journal article" date="2017" name="Plant J.">
        <title>Araport11: a complete reannotation of the Arabidopsis thaliana reference genome.</title>
        <authorList>
            <person name="Cheng C.Y."/>
            <person name="Krishnakumar V."/>
            <person name="Chan A.P."/>
            <person name="Thibaud-Nissen F."/>
            <person name="Schobel S."/>
            <person name="Town C.D."/>
        </authorList>
    </citation>
    <scope>GENOME REANNOTATION</scope>
    <source>
        <strain>cv. Columbia</strain>
    </source>
</reference>
<reference key="3">
    <citation type="journal article" date="2001" name="Science">
        <title>The identity of plant glutamate receptors.</title>
        <authorList>
            <person name="Lacombe B."/>
            <person name="Becker D."/>
            <person name="Hedrich R."/>
            <person name="DeSalle R."/>
            <person name="Hollmann M."/>
            <person name="Kwak J.M."/>
            <person name="Schroeder J.I."/>
            <person name="Le Novere N."/>
            <person name="Nam H.G."/>
            <person name="Spalding E.P."/>
            <person name="Tester M."/>
            <person name="Turano F.J."/>
            <person name="Chiu J."/>
            <person name="Coruzzi G."/>
        </authorList>
    </citation>
    <scope>GENE FAMILY</scope>
    <scope>NOMENCLATURE</scope>
</reference>
<reference key="4">
    <citation type="journal article" date="2002" name="Mol. Biol. Evol.">
        <title>Phylogenetic and expression analysis of the glutamate-receptor-like gene family in Arabidopsis thaliana.</title>
        <authorList>
            <person name="Chiu J.C."/>
            <person name="Brenner E.D."/>
            <person name="DeSalle R."/>
            <person name="Nitabach M.N."/>
            <person name="Holmes T.C."/>
            <person name="Coruzzi G.M."/>
        </authorList>
    </citation>
    <scope>TISSUE SPECIFICITY</scope>
</reference>
<dbReference type="EMBL" id="AC005315">
    <property type="protein sequence ID" value="AAC33236.1"/>
    <property type="molecule type" value="Genomic_DNA"/>
</dbReference>
<dbReference type="EMBL" id="CP002685">
    <property type="protein sequence ID" value="AEC08211.1"/>
    <property type="molecule type" value="Genomic_DNA"/>
</dbReference>
<dbReference type="PIR" id="T02740">
    <property type="entry name" value="T02740"/>
</dbReference>
<dbReference type="RefSeq" id="NP_180474.1">
    <property type="nucleotide sequence ID" value="NM_128467.1"/>
</dbReference>
<dbReference type="SMR" id="O81078"/>
<dbReference type="BioGRID" id="2808">
    <property type="interactions" value="20"/>
</dbReference>
<dbReference type="FunCoup" id="O81078">
    <property type="interactions" value="179"/>
</dbReference>
<dbReference type="IntAct" id="O81078">
    <property type="interactions" value="8"/>
</dbReference>
<dbReference type="STRING" id="3702.O81078"/>
<dbReference type="GlyCosmos" id="O81078">
    <property type="glycosylation" value="9 sites, No reported glycans"/>
</dbReference>
<dbReference type="GlyGen" id="O81078">
    <property type="glycosylation" value="9 sites"/>
</dbReference>
<dbReference type="PaxDb" id="3702-AT2G29100.1"/>
<dbReference type="EnsemblPlants" id="AT2G29100.1">
    <property type="protein sequence ID" value="AT2G29100.1"/>
    <property type="gene ID" value="AT2G29100"/>
</dbReference>
<dbReference type="GeneID" id="817458"/>
<dbReference type="Gramene" id="AT2G29100.1">
    <property type="protein sequence ID" value="AT2G29100.1"/>
    <property type="gene ID" value="AT2G29100"/>
</dbReference>
<dbReference type="KEGG" id="ath:AT2G29100"/>
<dbReference type="Araport" id="AT2G29100"/>
<dbReference type="TAIR" id="AT2G29100">
    <property type="gene designation" value="GLR2.9"/>
</dbReference>
<dbReference type="eggNOG" id="KOG1052">
    <property type="taxonomic scope" value="Eukaryota"/>
</dbReference>
<dbReference type="HOGENOM" id="CLU_007358_0_2_1"/>
<dbReference type="InParanoid" id="O81078"/>
<dbReference type="OMA" id="WWYLIGA"/>
<dbReference type="PhylomeDB" id="O81078"/>
<dbReference type="PRO" id="PR:O81078"/>
<dbReference type="Proteomes" id="UP000006548">
    <property type="component" value="Chromosome 2"/>
</dbReference>
<dbReference type="ExpressionAtlas" id="O81078">
    <property type="expression patterns" value="baseline and differential"/>
</dbReference>
<dbReference type="GO" id="GO:0005886">
    <property type="term" value="C:plasma membrane"/>
    <property type="evidence" value="ECO:0000250"/>
    <property type="project" value="UniProtKB"/>
</dbReference>
<dbReference type="GO" id="GO:0005262">
    <property type="term" value="F:calcium channel activity"/>
    <property type="evidence" value="ECO:0000250"/>
    <property type="project" value="UniProtKB"/>
</dbReference>
<dbReference type="GO" id="GO:0008066">
    <property type="term" value="F:glutamate receptor activity"/>
    <property type="evidence" value="ECO:0000250"/>
    <property type="project" value="UniProtKB"/>
</dbReference>
<dbReference type="GO" id="GO:0015276">
    <property type="term" value="F:ligand-gated monoatomic ion channel activity"/>
    <property type="evidence" value="ECO:0007669"/>
    <property type="project" value="InterPro"/>
</dbReference>
<dbReference type="GO" id="GO:0006816">
    <property type="term" value="P:calcium ion transport"/>
    <property type="evidence" value="ECO:0000250"/>
    <property type="project" value="UniProtKB"/>
</dbReference>
<dbReference type="GO" id="GO:0019722">
    <property type="term" value="P:calcium-mediated signaling"/>
    <property type="evidence" value="ECO:0000250"/>
    <property type="project" value="UniProtKB"/>
</dbReference>
<dbReference type="GO" id="GO:0071230">
    <property type="term" value="P:cellular response to amino acid stimulus"/>
    <property type="evidence" value="ECO:0000250"/>
    <property type="project" value="UniProtKB"/>
</dbReference>
<dbReference type="CDD" id="cd13686">
    <property type="entry name" value="GluR_Plant"/>
    <property type="match status" value="1"/>
</dbReference>
<dbReference type="CDD" id="cd19990">
    <property type="entry name" value="PBP1_GABAb_receptor_plant"/>
    <property type="match status" value="1"/>
</dbReference>
<dbReference type="FunFam" id="1.10.287.70:FF:000037">
    <property type="entry name" value="Glutamate receptor"/>
    <property type="match status" value="1"/>
</dbReference>
<dbReference type="FunFam" id="3.40.190.10:FF:000039">
    <property type="entry name" value="Glutamate receptor"/>
    <property type="match status" value="1"/>
</dbReference>
<dbReference type="FunFam" id="3.40.190.10:FF:000103">
    <property type="entry name" value="Glutamate receptor"/>
    <property type="match status" value="1"/>
</dbReference>
<dbReference type="FunFam" id="3.40.190.10:FF:000217">
    <property type="entry name" value="Glutamate receptor"/>
    <property type="match status" value="1"/>
</dbReference>
<dbReference type="FunFam" id="3.40.50.2300:FF:000081">
    <property type="entry name" value="Glutamate receptor"/>
    <property type="match status" value="1"/>
</dbReference>
<dbReference type="FunFam" id="3.40.50.2300:FF:000310">
    <property type="entry name" value="Glutamate receptor"/>
    <property type="match status" value="1"/>
</dbReference>
<dbReference type="Gene3D" id="1.10.287.70">
    <property type="match status" value="1"/>
</dbReference>
<dbReference type="Gene3D" id="3.40.50.2300">
    <property type="match status" value="2"/>
</dbReference>
<dbReference type="Gene3D" id="3.40.190.10">
    <property type="entry name" value="Periplasmic binding protein-like II"/>
    <property type="match status" value="3"/>
</dbReference>
<dbReference type="InterPro" id="IPR001828">
    <property type="entry name" value="ANF_lig-bd_rcpt"/>
</dbReference>
<dbReference type="InterPro" id="IPR044440">
    <property type="entry name" value="GABAb_receptor_plant_PBP1"/>
</dbReference>
<dbReference type="InterPro" id="IPR015683">
    <property type="entry name" value="Ionotropic_Glu_rcpt"/>
</dbReference>
<dbReference type="InterPro" id="IPR001320">
    <property type="entry name" value="Iontro_rcpt_C"/>
</dbReference>
<dbReference type="InterPro" id="IPR017103">
    <property type="entry name" value="Iontropic_Glu_rcpt_pln"/>
</dbReference>
<dbReference type="InterPro" id="IPR028082">
    <property type="entry name" value="Peripla_BP_I"/>
</dbReference>
<dbReference type="InterPro" id="IPR001638">
    <property type="entry name" value="Solute-binding_3/MltF_N"/>
</dbReference>
<dbReference type="PANTHER" id="PTHR34836">
    <property type="entry name" value="OS06G0188250 PROTEIN"/>
    <property type="match status" value="1"/>
</dbReference>
<dbReference type="PANTHER" id="PTHR34836:SF1">
    <property type="entry name" value="OS09G0428600 PROTEIN"/>
    <property type="match status" value="1"/>
</dbReference>
<dbReference type="Pfam" id="PF01094">
    <property type="entry name" value="ANF_receptor"/>
    <property type="match status" value="1"/>
</dbReference>
<dbReference type="Pfam" id="PF00060">
    <property type="entry name" value="Lig_chan"/>
    <property type="match status" value="1"/>
</dbReference>
<dbReference type="Pfam" id="PF00497">
    <property type="entry name" value="SBP_bac_3"/>
    <property type="match status" value="1"/>
</dbReference>
<dbReference type="PIRSF" id="PIRSF037090">
    <property type="entry name" value="Iontro_Glu-like_rcpt_pln"/>
    <property type="match status" value="1"/>
</dbReference>
<dbReference type="SMART" id="SM00079">
    <property type="entry name" value="PBPe"/>
    <property type="match status" value="1"/>
</dbReference>
<dbReference type="SUPFAM" id="SSF53822">
    <property type="entry name" value="Periplasmic binding protein-like I"/>
    <property type="match status" value="1"/>
</dbReference>
<dbReference type="SUPFAM" id="SSF53850">
    <property type="entry name" value="Periplasmic binding protein-like II"/>
    <property type="match status" value="1"/>
</dbReference>
<accession>O81078</accession>
<protein>
    <recommendedName>
        <fullName>Glutamate receptor 2.9</fullName>
    </recommendedName>
    <alternativeName>
        <fullName>Ligand-gated ion channel 2.9</fullName>
    </alternativeName>
</protein>
<feature type="signal peptide" evidence="2">
    <location>
        <begin position="1"/>
        <end position="23"/>
    </location>
</feature>
<feature type="chain" id="PRO_0000011604" description="Glutamate receptor 2.9">
    <location>
        <begin position="24"/>
        <end position="940"/>
    </location>
</feature>
<feature type="topological domain" description="Extracellular" evidence="2">
    <location>
        <begin position="24"/>
        <end position="566"/>
    </location>
</feature>
<feature type="transmembrane region" description="Helical" evidence="2">
    <location>
        <begin position="567"/>
        <end position="587"/>
    </location>
</feature>
<feature type="topological domain" description="Cytoplasmic" evidence="2">
    <location>
        <begin position="588"/>
        <end position="596"/>
    </location>
</feature>
<feature type="transmembrane region" description="Helical" evidence="2">
    <location>
        <begin position="597"/>
        <end position="617"/>
    </location>
</feature>
<feature type="topological domain" description="Cytoplasmic" evidence="2">
    <location>
        <begin position="618"/>
        <end position="628"/>
    </location>
</feature>
<feature type="transmembrane region" description="Helical" evidence="2">
    <location>
        <begin position="629"/>
        <end position="649"/>
    </location>
</feature>
<feature type="topological domain" description="Extracellular" evidence="2">
    <location>
        <begin position="650"/>
        <end position="811"/>
    </location>
</feature>
<feature type="transmembrane region" description="Helical" evidence="2">
    <location>
        <begin position="812"/>
        <end position="832"/>
    </location>
</feature>
<feature type="topological domain" description="Cytoplasmic" evidence="2">
    <location>
        <begin position="833"/>
        <end position="940"/>
    </location>
</feature>
<feature type="region of interest" description="Disordered" evidence="3">
    <location>
        <begin position="876"/>
        <end position="900"/>
    </location>
</feature>
<feature type="region of interest" description="Disordered" evidence="3">
    <location>
        <begin position="914"/>
        <end position="940"/>
    </location>
</feature>
<feature type="glycosylation site" description="N-linked (GlcNAc...) asparagine" evidence="2">
    <location>
        <position position="25"/>
    </location>
</feature>
<feature type="glycosylation site" description="N-linked (GlcNAc...) asparagine" evidence="2">
    <location>
        <position position="39"/>
    </location>
</feature>
<feature type="glycosylation site" description="N-linked (GlcNAc...) asparagine" evidence="2">
    <location>
        <position position="115"/>
    </location>
</feature>
<feature type="glycosylation site" description="N-linked (GlcNAc...) asparagine" evidence="2">
    <location>
        <position position="338"/>
    </location>
</feature>
<feature type="glycosylation site" description="N-linked (GlcNAc...) asparagine" evidence="2">
    <location>
        <position position="345"/>
    </location>
</feature>
<feature type="glycosylation site" description="N-linked (GlcNAc...) asparagine" evidence="2">
    <location>
        <position position="528"/>
    </location>
</feature>
<feature type="glycosylation site" description="N-linked (GlcNAc...) asparagine" evidence="2">
    <location>
        <position position="771"/>
    </location>
</feature>
<feature type="glycosylation site" description="N-linked (GlcNAc...) asparagine" evidence="2">
    <location>
        <position position="776"/>
    </location>
</feature>
<feature type="glycosylation site" description="N-linked (GlcNAc...) asparagine" evidence="2">
    <location>
        <position position="805"/>
    </location>
</feature>
<evidence type="ECO:0000250" key="1"/>
<evidence type="ECO:0000255" key="2"/>
<evidence type="ECO:0000256" key="3">
    <source>
        <dbReference type="SAM" id="MobiDB-lite"/>
    </source>
</evidence>
<evidence type="ECO:0000269" key="4">
    <source>
    </source>
</evidence>
<evidence type="ECO:0000305" key="5"/>
<organism>
    <name type="scientific">Arabidopsis thaliana</name>
    <name type="common">Mouse-ear cress</name>
    <dbReference type="NCBI Taxonomy" id="3702"/>
    <lineage>
        <taxon>Eukaryota</taxon>
        <taxon>Viridiplantae</taxon>
        <taxon>Streptophyta</taxon>
        <taxon>Embryophyta</taxon>
        <taxon>Tracheophyta</taxon>
        <taxon>Spermatophyta</taxon>
        <taxon>Magnoliopsida</taxon>
        <taxon>eudicotyledons</taxon>
        <taxon>Gunneridae</taxon>
        <taxon>Pentapetalae</taxon>
        <taxon>rosids</taxon>
        <taxon>malvids</taxon>
        <taxon>Brassicales</taxon>
        <taxon>Brassicaceae</taxon>
        <taxon>Camelineae</taxon>
        <taxon>Arabidopsis</taxon>
    </lineage>
</organism>
<sequence>MKTNNTFLSYFVCGFLLMGVGLGQNQTSEIKVGVVLDLNTTFSKICLTSIKMAVSDFYADHPNYLTRLTLHVRDSMEDTVQASAAALDLIKTEQVSAIIGPINSMQADFMIKLANKTQVPTITFSATSPLLTSIKSPYFVRATIDDSSQVRAIASIFKFFRWRRVVAIYVDNEFGEGFMPFLFDALQDVEVKRSVIPPEAIDDEIQKELRKLMERQARVFVVHMESSLALRVFQIARDIGMMEEGYVWLMTNGMTHMMRHINNGRSLNTIEGVLGVRSHVPKSKELGDFRLRWKRTFEKENPSMRDDLNVFALWAYDSITALAKAVEKANTKSLWYDNGSTLSKNRTDLGNVGVSLYGPSLQKAFSEVRFNGLAGEFKLIDGQLQSPKFEIINFVGNEERIIGFWTPRDGLMDATSSNKKTLGPVIWPGKSKIVPKGWEIPGKKLRVGVPMKKGFFDFVKVTINPITNKKTPTGYAIEIFEAALKELPYLVIPEYVSFESPNNYNNLVYQVYDKTWDAVVGDITITANRSLYADFTLPFTESGVSMMVPVRDNENKDTWVFLEPWSLELWVTTGCFFVFIGFVVWLFEHRVNTDFRGPPQYQIGTSLWFSFSTMVFAHRENVVSNLARFVVVVWCFVVLVLTQSYTASLTSFLTVQSLQPTVTNVNDLIKNRDCVGYQGGAFVKDILLGLGFHEDQLKPFDSAKDADDLLSKGKSKGIAAAFDEVAYLKAILSQSCSKYVMVEPTFKTGGFGFAFPKNSPLTGEFSRAILNLTQNNVTQQIEDRWFPKKNDCPDPMTALSSNRLNLSSFLGLFLIAGTAISFSLLVFVALFLYEHRHTLGDDSEDSLWRKLKFLFKIFDEKDMNSHTFKNSAIHNISSPMTHKTPSPSTVQITPWPQSPSQNREFELRRVSFSPSEERFTTQPIIHHEDGESDIECRVEQ</sequence>
<proteinExistence type="evidence at transcript level"/>
<name>GLR29_ARATH</name>